<accession>A4WFK6</accession>
<organism>
    <name type="scientific">Enterobacter sp. (strain 638)</name>
    <dbReference type="NCBI Taxonomy" id="399742"/>
    <lineage>
        <taxon>Bacteria</taxon>
        <taxon>Pseudomonadati</taxon>
        <taxon>Pseudomonadota</taxon>
        <taxon>Gammaproteobacteria</taxon>
        <taxon>Enterobacterales</taxon>
        <taxon>Enterobacteriaceae</taxon>
        <taxon>Enterobacter</taxon>
    </lineage>
</organism>
<comment type="function">
    <text evidence="1">Positively regulates the transcription of the maltose regulon whose gene products are responsible for uptake and catabolism of malto-oligosaccharides. Specifically binds to the promoter region of its target genes, recognizing a short DNA motif called the MalT box.</text>
</comment>
<comment type="activity regulation">
    <text evidence="1">Activated by ATP and maltotriose, which are both required for DNA binding.</text>
</comment>
<comment type="subunit">
    <text evidence="1">Monomer in solution. Oligomerizes to an active state in the presence of the positive effectors ATP and maltotriose.</text>
</comment>
<comment type="similarity">
    <text evidence="1">Belongs to the MalT family.</text>
</comment>
<gene>
    <name evidence="1" type="primary">malT</name>
    <name type="ordered locus">Ent638_3831</name>
</gene>
<name>MALT_ENT38</name>
<protein>
    <recommendedName>
        <fullName evidence="1">HTH-type transcriptional regulator MalT</fullName>
    </recommendedName>
    <alternativeName>
        <fullName evidence="1">ATP-dependent transcriptional activator MalT</fullName>
    </alternativeName>
</protein>
<evidence type="ECO:0000255" key="1">
    <source>
        <dbReference type="HAMAP-Rule" id="MF_01247"/>
    </source>
</evidence>
<feature type="chain" id="PRO_1000085771" description="HTH-type transcriptional regulator MalT">
    <location>
        <begin position="1"/>
        <end position="901"/>
    </location>
</feature>
<feature type="domain" description="HTH luxR-type" evidence="1">
    <location>
        <begin position="829"/>
        <end position="894"/>
    </location>
</feature>
<feature type="DNA-binding region" description="H-T-H motif" evidence="1">
    <location>
        <begin position="853"/>
        <end position="872"/>
    </location>
</feature>
<feature type="binding site" evidence="1">
    <location>
        <begin position="39"/>
        <end position="46"/>
    </location>
    <ligand>
        <name>ATP</name>
        <dbReference type="ChEBI" id="CHEBI:30616"/>
    </ligand>
</feature>
<dbReference type="EMBL" id="CP000653">
    <property type="protein sequence ID" value="ABP62486.1"/>
    <property type="molecule type" value="Genomic_DNA"/>
</dbReference>
<dbReference type="RefSeq" id="WP_015960791.1">
    <property type="nucleotide sequence ID" value="NC_009436.1"/>
</dbReference>
<dbReference type="SMR" id="A4WFK6"/>
<dbReference type="STRING" id="399742.Ent638_3831"/>
<dbReference type="KEGG" id="ent:Ent638_3831"/>
<dbReference type="eggNOG" id="COG2909">
    <property type="taxonomic scope" value="Bacteria"/>
</dbReference>
<dbReference type="HOGENOM" id="CLU_006325_3_0_6"/>
<dbReference type="OrthoDB" id="1123107at2"/>
<dbReference type="Proteomes" id="UP000000230">
    <property type="component" value="Chromosome"/>
</dbReference>
<dbReference type="GO" id="GO:0005524">
    <property type="term" value="F:ATP binding"/>
    <property type="evidence" value="ECO:0007669"/>
    <property type="project" value="UniProtKB-UniRule"/>
</dbReference>
<dbReference type="GO" id="GO:0003677">
    <property type="term" value="F:DNA binding"/>
    <property type="evidence" value="ECO:0007669"/>
    <property type="project" value="UniProtKB-KW"/>
</dbReference>
<dbReference type="GO" id="GO:0003700">
    <property type="term" value="F:DNA-binding transcription factor activity"/>
    <property type="evidence" value="ECO:0007669"/>
    <property type="project" value="UniProtKB-UniRule"/>
</dbReference>
<dbReference type="GO" id="GO:0045913">
    <property type="term" value="P:positive regulation of carbohydrate metabolic process"/>
    <property type="evidence" value="ECO:0007669"/>
    <property type="project" value="UniProtKB-UniRule"/>
</dbReference>
<dbReference type="GO" id="GO:0045893">
    <property type="term" value="P:positive regulation of DNA-templated transcription"/>
    <property type="evidence" value="ECO:0007669"/>
    <property type="project" value="UniProtKB-UniRule"/>
</dbReference>
<dbReference type="CDD" id="cd06170">
    <property type="entry name" value="LuxR_C_like"/>
    <property type="match status" value="1"/>
</dbReference>
<dbReference type="FunFam" id="1.10.10.10:FF:000115">
    <property type="entry name" value="HTH-type transcriptional regulator MalT"/>
    <property type="match status" value="1"/>
</dbReference>
<dbReference type="Gene3D" id="3.40.50.300">
    <property type="entry name" value="P-loop containing nucleotide triphosphate hydrolases"/>
    <property type="match status" value="1"/>
</dbReference>
<dbReference type="Gene3D" id="1.25.40.10">
    <property type="entry name" value="Tetratricopeptide repeat domain"/>
    <property type="match status" value="1"/>
</dbReference>
<dbReference type="Gene3D" id="1.10.10.10">
    <property type="entry name" value="Winged helix-like DNA-binding domain superfamily/Winged helix DNA-binding domain"/>
    <property type="match status" value="1"/>
</dbReference>
<dbReference type="HAMAP" id="MF_01247">
    <property type="entry name" value="HTH_type_MalT"/>
    <property type="match status" value="1"/>
</dbReference>
<dbReference type="InterPro" id="IPR027417">
    <property type="entry name" value="P-loop_NTPase"/>
</dbReference>
<dbReference type="InterPro" id="IPR016032">
    <property type="entry name" value="Sig_transdc_resp-reg_C-effctor"/>
</dbReference>
<dbReference type="InterPro" id="IPR011990">
    <property type="entry name" value="TPR-like_helical_dom_sf"/>
</dbReference>
<dbReference type="InterPro" id="IPR041617">
    <property type="entry name" value="TPR_MalT"/>
</dbReference>
<dbReference type="InterPro" id="IPR023768">
    <property type="entry name" value="Tscrpt_reg_HTH_MalT"/>
</dbReference>
<dbReference type="InterPro" id="IPR000792">
    <property type="entry name" value="Tscrpt_reg_LuxR_C"/>
</dbReference>
<dbReference type="InterPro" id="IPR036388">
    <property type="entry name" value="WH-like_DNA-bd_sf"/>
</dbReference>
<dbReference type="NCBIfam" id="NF003420">
    <property type="entry name" value="PRK04841.1"/>
    <property type="match status" value="1"/>
</dbReference>
<dbReference type="PANTHER" id="PTHR44688">
    <property type="entry name" value="DNA-BINDING TRANSCRIPTIONAL ACTIVATOR DEVR_DOSR"/>
    <property type="match status" value="1"/>
</dbReference>
<dbReference type="PANTHER" id="PTHR44688:SF16">
    <property type="entry name" value="DNA-BINDING TRANSCRIPTIONAL ACTIVATOR DEVR_DOSR"/>
    <property type="match status" value="1"/>
</dbReference>
<dbReference type="Pfam" id="PF00196">
    <property type="entry name" value="GerE"/>
    <property type="match status" value="1"/>
</dbReference>
<dbReference type="Pfam" id="PF17874">
    <property type="entry name" value="TPR_MalT"/>
    <property type="match status" value="1"/>
</dbReference>
<dbReference type="PRINTS" id="PR00038">
    <property type="entry name" value="HTHLUXR"/>
</dbReference>
<dbReference type="SMART" id="SM00421">
    <property type="entry name" value="HTH_LUXR"/>
    <property type="match status" value="1"/>
</dbReference>
<dbReference type="SUPFAM" id="SSF46894">
    <property type="entry name" value="C-terminal effector domain of the bipartite response regulators"/>
    <property type="match status" value="1"/>
</dbReference>
<dbReference type="SUPFAM" id="SSF52540">
    <property type="entry name" value="P-loop containing nucleoside triphosphate hydrolases"/>
    <property type="match status" value="1"/>
</dbReference>
<dbReference type="SUPFAM" id="SSF48452">
    <property type="entry name" value="TPR-like"/>
    <property type="match status" value="1"/>
</dbReference>
<dbReference type="PROSITE" id="PS00622">
    <property type="entry name" value="HTH_LUXR_1"/>
    <property type="match status" value="1"/>
</dbReference>
<dbReference type="PROSITE" id="PS50043">
    <property type="entry name" value="HTH_LUXR_2"/>
    <property type="match status" value="1"/>
</dbReference>
<proteinExistence type="inferred from homology"/>
<reference key="1">
    <citation type="journal article" date="2010" name="PLoS Genet.">
        <title>Genome sequence of the plant growth promoting endophytic bacterium Enterobacter sp. 638.</title>
        <authorList>
            <person name="Taghavi S."/>
            <person name="van der Lelie D."/>
            <person name="Hoffman A."/>
            <person name="Zhang Y.B."/>
            <person name="Walla M.D."/>
            <person name="Vangronsveld J."/>
            <person name="Newman L."/>
            <person name="Monchy S."/>
        </authorList>
    </citation>
    <scope>NUCLEOTIDE SEQUENCE [LARGE SCALE GENOMIC DNA]</scope>
    <source>
        <strain>638</strain>
    </source>
</reference>
<sequence>MLIPSKLSRPVRLDHTVVRERLLAKLSGANNFRLALITSPAGYGKTTLISQWASGKSDLGWYSLDEGDNQTERFASYLIAAIQQATNGHCVTSEIMVQKRQYASLSSLFAQLFIELAEWHRPLYLVIDDYHLITNPVIHESMRFFLRHQPENLTLVVLSRNLPQLGIANLRVRDQLLEVGSQQLSFNHQEAKQFFDCRLSSPIEAAESSRLCDDVAGWATALQLIALSARQNNSPTHQSARRLSGINASHLSDYLVDEVLDSVDPATRQFLLKSSLLRSMNDALIVRVTGEDNGQMRLEEIERQGLFLQRMDDSGEWFSFHPLFGSFLRQRCQWELATELPEVHRSAAESWMAQGFPSEAIHHALAAGDANMLRDILLNHAWGLFNHSELTLLEESLRALPWESLLENPRLVLLQAWLMQSQHRYSEVNMLLARAEQEMKGEMDPTLHGEFNALRAQVAINDGDPEEAERLAMIALDELPLANFYSRIVATSVHGEVLHCKGDLSRSLALMQQTEQMARRHDIWHYALWSMIQQSEILFAQGFLQAAWETQEKAFQLIHDQHLEQLPMHEFLLRIRAQLLWAWSRLDEAESSARHGVEVLSAFQPQQQLQCLALLVQCSLARGDLDNARNHLNRLENLLGNGQYHSDWVSNADKVRVIYWQMIGDKKSAANWLRQTPKPEFANNHFLQSQWRNIARVQILLGDFDPAEIVLEELNENARSLRLMSDLNRNLLLLNQLYWQAGRKNDAQRVLLEALQLANRTGFISHFVIEGEVMAQQLRQLIQLNTLPELDQHRAQRILREINQHHRHKFAHFDENFVERLLTHPEVPELIRTSPLTQREWQVLGLIYSGYSNEQIAGELAVAATTIKTHIRNLYQKLGVAHRQDAVQHAQQLLKMMGYGV</sequence>
<keyword id="KW-0010">Activator</keyword>
<keyword id="KW-0067">ATP-binding</keyword>
<keyword id="KW-0119">Carbohydrate metabolism</keyword>
<keyword id="KW-0238">DNA-binding</keyword>
<keyword id="KW-0547">Nucleotide-binding</keyword>
<keyword id="KW-0804">Transcription</keyword>
<keyword id="KW-0805">Transcription regulation</keyword>